<keyword id="KW-0963">Cytoplasm</keyword>
<keyword id="KW-0251">Elongation factor</keyword>
<keyword id="KW-0342">GTP-binding</keyword>
<keyword id="KW-0547">Nucleotide-binding</keyword>
<keyword id="KW-0648">Protein biosynthesis</keyword>
<evidence type="ECO:0000250" key="1"/>
<evidence type="ECO:0000256" key="2">
    <source>
        <dbReference type="SAM" id="MobiDB-lite"/>
    </source>
</evidence>
<evidence type="ECO:0000305" key="3"/>
<comment type="function">
    <text evidence="1">Catalyzes the GTP-dependent ribosomal translocation step during translation elongation. During this step, the ribosome changes from the pre-translocational (PRE) to the post-translocational (POST) state as the newly formed A-site-bound peptidyl-tRNA and P-site-bound deacylated tRNA move to the P and E sites, respectively. Catalyzes the coordinated movement of the two tRNA molecules, the mRNA and conformational changes in the ribosome (By similarity).</text>
</comment>
<comment type="subcellular location">
    <subcellularLocation>
        <location evidence="1">Cytoplasm</location>
    </subcellularLocation>
</comment>
<comment type="similarity">
    <text evidence="3">Belongs to the GTP-binding elongation factor family. EF-G/EF-2 subfamily.</text>
</comment>
<dbReference type="PIR" id="PW0010">
    <property type="entry name" value="PW0010"/>
</dbReference>
<dbReference type="GO" id="GO:0005737">
    <property type="term" value="C:cytoplasm"/>
    <property type="evidence" value="ECO:0007669"/>
    <property type="project" value="UniProtKB-SubCell"/>
</dbReference>
<dbReference type="GO" id="GO:0005525">
    <property type="term" value="F:GTP binding"/>
    <property type="evidence" value="ECO:0007669"/>
    <property type="project" value="UniProtKB-KW"/>
</dbReference>
<dbReference type="GO" id="GO:0003924">
    <property type="term" value="F:GTPase activity"/>
    <property type="evidence" value="ECO:0007669"/>
    <property type="project" value="InterPro"/>
</dbReference>
<dbReference type="GO" id="GO:0003746">
    <property type="term" value="F:translation elongation factor activity"/>
    <property type="evidence" value="ECO:0007669"/>
    <property type="project" value="UniProtKB-KW"/>
</dbReference>
<dbReference type="GO" id="GO:0032790">
    <property type="term" value="P:ribosome disassembly"/>
    <property type="evidence" value="ECO:0007669"/>
    <property type="project" value="TreeGrafter"/>
</dbReference>
<dbReference type="Gene3D" id="3.40.50.300">
    <property type="entry name" value="P-loop containing nucleotide triphosphate hydrolases"/>
    <property type="match status" value="1"/>
</dbReference>
<dbReference type="InterPro" id="IPR027417">
    <property type="entry name" value="P-loop_NTPase"/>
</dbReference>
<dbReference type="InterPro" id="IPR000795">
    <property type="entry name" value="T_Tr_GTP-bd_dom"/>
</dbReference>
<dbReference type="PANTHER" id="PTHR43261:SF1">
    <property type="entry name" value="RIBOSOME-RELEASING FACTOR 2, MITOCHONDRIAL"/>
    <property type="match status" value="1"/>
</dbReference>
<dbReference type="PANTHER" id="PTHR43261">
    <property type="entry name" value="TRANSLATION ELONGATION FACTOR G-RELATED"/>
    <property type="match status" value="1"/>
</dbReference>
<dbReference type="Pfam" id="PF00009">
    <property type="entry name" value="GTP_EFTU"/>
    <property type="match status" value="1"/>
</dbReference>
<dbReference type="SUPFAM" id="SSF52540">
    <property type="entry name" value="P-loop containing nucleoside triphosphate hydrolases"/>
    <property type="match status" value="1"/>
</dbReference>
<sequence length="79" mass="8967">MARQFSLENTRNIGIMAHIDAGKTTTTERILFYTGRVHKIGEVHEAQPRWTGWSKSKSAGSRSRRRRQRHNGKATASTS</sequence>
<feature type="chain" id="PRO_0000091070" description="Elongation factor G">
    <location>
        <begin position="1"/>
        <end position="79" status="greater than"/>
    </location>
</feature>
<feature type="region of interest" description="Disordered" evidence="2">
    <location>
        <begin position="45"/>
        <end position="79"/>
    </location>
</feature>
<feature type="compositionally biased region" description="Basic residues" evidence="2">
    <location>
        <begin position="62"/>
        <end position="72"/>
    </location>
</feature>
<feature type="binding site" evidence="1">
    <location>
        <begin position="17"/>
        <end position="24"/>
    </location>
    <ligand>
        <name>GTP</name>
        <dbReference type="ChEBI" id="CHEBI:37565"/>
    </ligand>
</feature>
<feature type="non-terminal residue">
    <location>
        <position position="79"/>
    </location>
</feature>
<name>EFG_GEOSE</name>
<protein>
    <recommendedName>
        <fullName>Elongation factor G</fullName>
        <shortName>EF-G</shortName>
    </recommendedName>
</protein>
<organism>
    <name type="scientific">Geobacillus stearothermophilus</name>
    <name type="common">Bacillus stearothermophilus</name>
    <dbReference type="NCBI Taxonomy" id="1422"/>
    <lineage>
        <taxon>Bacteria</taxon>
        <taxon>Bacillati</taxon>
        <taxon>Bacillota</taxon>
        <taxon>Bacilli</taxon>
        <taxon>Bacillales</taxon>
        <taxon>Anoxybacillaceae</taxon>
        <taxon>Geobacillus</taxon>
    </lineage>
</organism>
<gene>
    <name type="primary">fusA</name>
</gene>
<proteinExistence type="inferred from homology"/>
<reference key="1">
    <citation type="journal article" date="1991" name="Agric. Biol. Chem.">
        <title>The nucleotide sequences of Bacillus stearothermophilus ribosomal protein S12 and S7 genes: comparison with the str operon of Escherichia coli.</title>
        <authorList>
            <person name="Kimura M."/>
        </authorList>
    </citation>
    <scope>NUCLEOTIDE SEQUENCE [GENOMIC DNA]</scope>
    <source>
        <strain>ATCC 29609 / DSM 2027 / NCA 1503 / NCIMB 8924</strain>
    </source>
</reference>
<accession>P23081</accession>